<accession>A4FLW9</accession>
<proteinExistence type="inferred from homology"/>
<gene>
    <name evidence="1" type="primary">rhmD</name>
    <name type="ordered locus">SACE_5860</name>
</gene>
<organism>
    <name type="scientific">Saccharopolyspora erythraea (strain ATCC 11635 / DSM 40517 / JCM 4748 / NBRC 13426 / NCIMB 8594 / NRRL 2338)</name>
    <dbReference type="NCBI Taxonomy" id="405948"/>
    <lineage>
        <taxon>Bacteria</taxon>
        <taxon>Bacillati</taxon>
        <taxon>Actinomycetota</taxon>
        <taxon>Actinomycetes</taxon>
        <taxon>Pseudonocardiales</taxon>
        <taxon>Pseudonocardiaceae</taxon>
        <taxon>Saccharopolyspora</taxon>
    </lineage>
</organism>
<dbReference type="EC" id="4.2.1.90" evidence="1"/>
<dbReference type="EMBL" id="AM420293">
    <property type="protein sequence ID" value="CAM05044.1"/>
    <property type="molecule type" value="Genomic_DNA"/>
</dbReference>
<dbReference type="RefSeq" id="WP_009943127.1">
    <property type="nucleotide sequence ID" value="NC_009142.1"/>
</dbReference>
<dbReference type="SMR" id="A4FLW9"/>
<dbReference type="STRING" id="405948.SACE_5860"/>
<dbReference type="KEGG" id="sen:SACE_5860"/>
<dbReference type="eggNOG" id="COG4948">
    <property type="taxonomic scope" value="Bacteria"/>
</dbReference>
<dbReference type="HOGENOM" id="CLU_030273_1_0_11"/>
<dbReference type="OrthoDB" id="5241672at2"/>
<dbReference type="Proteomes" id="UP000006728">
    <property type="component" value="Chromosome"/>
</dbReference>
<dbReference type="GO" id="GO:0050032">
    <property type="term" value="F:L-rhamnonate dehydratase activity"/>
    <property type="evidence" value="ECO:0007669"/>
    <property type="project" value="UniProtKB-UniRule"/>
</dbReference>
<dbReference type="GO" id="GO:0000287">
    <property type="term" value="F:magnesium ion binding"/>
    <property type="evidence" value="ECO:0007669"/>
    <property type="project" value="UniProtKB-UniRule"/>
</dbReference>
<dbReference type="GO" id="GO:0009063">
    <property type="term" value="P:amino acid catabolic process"/>
    <property type="evidence" value="ECO:0007669"/>
    <property type="project" value="InterPro"/>
</dbReference>
<dbReference type="GO" id="GO:0016052">
    <property type="term" value="P:carbohydrate catabolic process"/>
    <property type="evidence" value="ECO:0007669"/>
    <property type="project" value="TreeGrafter"/>
</dbReference>
<dbReference type="CDD" id="cd03327">
    <property type="entry name" value="MR_like_2"/>
    <property type="match status" value="1"/>
</dbReference>
<dbReference type="FunFam" id="3.20.20.120:FF:000005">
    <property type="entry name" value="Putative L-rhamnonate dehydratase"/>
    <property type="match status" value="1"/>
</dbReference>
<dbReference type="Gene3D" id="3.20.20.120">
    <property type="entry name" value="Enolase-like C-terminal domain"/>
    <property type="match status" value="1"/>
</dbReference>
<dbReference type="Gene3D" id="3.30.390.10">
    <property type="entry name" value="Enolase-like, N-terminal domain"/>
    <property type="match status" value="1"/>
</dbReference>
<dbReference type="HAMAP" id="MF_01288">
    <property type="entry name" value="Rhamnon_dehydrat"/>
    <property type="match status" value="1"/>
</dbReference>
<dbReference type="InterPro" id="IPR036849">
    <property type="entry name" value="Enolase-like_C_sf"/>
</dbReference>
<dbReference type="InterPro" id="IPR029017">
    <property type="entry name" value="Enolase-like_N"/>
</dbReference>
<dbReference type="InterPro" id="IPR029065">
    <property type="entry name" value="Enolase_C-like"/>
</dbReference>
<dbReference type="InterPro" id="IPR023444">
    <property type="entry name" value="L-Rhamnon_dehydrat"/>
</dbReference>
<dbReference type="InterPro" id="IPR018110">
    <property type="entry name" value="Mandel_Rmase/mucon_lact_enz_CS"/>
</dbReference>
<dbReference type="InterPro" id="IPR013342">
    <property type="entry name" value="Mandelate_racemase_C"/>
</dbReference>
<dbReference type="InterPro" id="IPR013341">
    <property type="entry name" value="Mandelate_racemase_N_dom"/>
</dbReference>
<dbReference type="InterPro" id="IPR046945">
    <property type="entry name" value="RHMD-like"/>
</dbReference>
<dbReference type="NCBIfam" id="NF011968">
    <property type="entry name" value="PRK15440.1"/>
    <property type="match status" value="1"/>
</dbReference>
<dbReference type="PANTHER" id="PTHR13794">
    <property type="entry name" value="ENOLASE SUPERFAMILY, MANDELATE RACEMASE"/>
    <property type="match status" value="1"/>
</dbReference>
<dbReference type="PANTHER" id="PTHR13794:SF58">
    <property type="entry name" value="MITOCHONDRIAL ENOLASE SUPERFAMILY MEMBER 1"/>
    <property type="match status" value="1"/>
</dbReference>
<dbReference type="Pfam" id="PF13378">
    <property type="entry name" value="MR_MLE_C"/>
    <property type="match status" value="1"/>
</dbReference>
<dbReference type="Pfam" id="PF02746">
    <property type="entry name" value="MR_MLE_N"/>
    <property type="match status" value="1"/>
</dbReference>
<dbReference type="SFLD" id="SFLDS00001">
    <property type="entry name" value="Enolase"/>
    <property type="match status" value="1"/>
</dbReference>
<dbReference type="SFLD" id="SFLDF00006">
    <property type="entry name" value="rhamnonate_dehydratase"/>
    <property type="match status" value="1"/>
</dbReference>
<dbReference type="SMART" id="SM00922">
    <property type="entry name" value="MR_MLE"/>
    <property type="match status" value="1"/>
</dbReference>
<dbReference type="SUPFAM" id="SSF51604">
    <property type="entry name" value="Enolase C-terminal domain-like"/>
    <property type="match status" value="1"/>
</dbReference>
<dbReference type="SUPFAM" id="SSF54826">
    <property type="entry name" value="Enolase N-terminal domain-like"/>
    <property type="match status" value="1"/>
</dbReference>
<dbReference type="PROSITE" id="PS00908">
    <property type="entry name" value="MR_MLE_1"/>
    <property type="match status" value="1"/>
</dbReference>
<feature type="chain" id="PRO_0000351702" description="L-rhamnonate dehydratase">
    <location>
        <begin position="1"/>
        <end position="390"/>
    </location>
</feature>
<feature type="active site" description="Proton acceptor" evidence="1">
    <location>
        <position position="315"/>
    </location>
</feature>
<feature type="binding site" evidence="1">
    <location>
        <position position="19"/>
    </location>
    <ligand>
        <name>substrate</name>
    </ligand>
</feature>
<feature type="binding site" evidence="1">
    <location>
        <position position="45"/>
    </location>
    <ligand>
        <name>substrate</name>
    </ligand>
</feature>
<feature type="binding site" evidence="1">
    <location>
        <position position="211"/>
    </location>
    <ligand>
        <name>Mg(2+)</name>
        <dbReference type="ChEBI" id="CHEBI:18420"/>
    </ligand>
</feature>
<feature type="binding site" evidence="1">
    <location>
        <position position="237"/>
    </location>
    <ligand>
        <name>Mg(2+)</name>
        <dbReference type="ChEBI" id="CHEBI:18420"/>
    </ligand>
</feature>
<feature type="binding site" evidence="1">
    <location>
        <position position="265"/>
    </location>
    <ligand>
        <name>Mg(2+)</name>
        <dbReference type="ChEBI" id="CHEBI:18420"/>
    </ligand>
</feature>
<feature type="binding site" evidence="1">
    <location>
        <position position="335"/>
    </location>
    <ligand>
        <name>substrate</name>
    </ligand>
</feature>
<feature type="site" description="Increases basicity of active site His" evidence="1">
    <location>
        <position position="288"/>
    </location>
</feature>
<feature type="site" description="Transition state stabilizer" evidence="1">
    <location>
        <position position="335"/>
    </location>
</feature>
<name>RHMD_SACEN</name>
<keyword id="KW-0456">Lyase</keyword>
<keyword id="KW-0460">Magnesium</keyword>
<keyword id="KW-0479">Metal-binding</keyword>
<keyword id="KW-1185">Reference proteome</keyword>
<protein>
    <recommendedName>
        <fullName evidence="1">L-rhamnonate dehydratase</fullName>
        <shortName evidence="1">RhamD</shortName>
        <ecNumber evidence="1">4.2.1.90</ecNumber>
    </recommendedName>
</protein>
<reference key="1">
    <citation type="journal article" date="2007" name="Nat. Biotechnol.">
        <title>Complete genome sequence of the erythromycin-producing bacterium Saccharopolyspora erythraea NRRL23338.</title>
        <authorList>
            <person name="Oliynyk M."/>
            <person name="Samborskyy M."/>
            <person name="Lester J.B."/>
            <person name="Mironenko T."/>
            <person name="Scott N."/>
            <person name="Dickens S."/>
            <person name="Haydock S.F."/>
            <person name="Leadlay P.F."/>
        </authorList>
    </citation>
    <scope>NUCLEOTIDE SEQUENCE [LARGE SCALE GENOMIC DNA]</scope>
    <source>
        <strain>ATCC 11635 / DSM 40517 / JCM 4748 / NBRC 13426 / NCIMB 8594 / NRRL 2338</strain>
    </source>
</reference>
<evidence type="ECO:0000255" key="1">
    <source>
        <dbReference type="HAMAP-Rule" id="MF_01288"/>
    </source>
</evidence>
<sequence length="390" mass="43636">MKIRQVRALTVTGGGADYHDQAEDHWIDDHVATPMAKYPEYRASRQAFGINVLGTLVVEVEAEDGTVGVGVTTAGEPGAYIVEKHLARFVEGASVTDVEKIWDQMFNATLYYGRKGLVLNAISAVDLALYDLLGKIRQEPVYALLGGPVRDELQCYATTGRPDVAKELGFLGGKMTLQHGPAEGVEGLHANIERLRKMREQVGPDFWLMFDCWMALDVEYATRLAHAAAEYDLKWLEEALIPDDYWGYGELRRRMPSTMLMTTGEHEHTRYGFRLLLEMGRPDIIQPDVNWCGGITELIKISALADAHGAMVVPHGSSVYSYHFVITRHNSPFTEFLMMHPQATEVVPMFSPLLLDEPVPVGGRLRLPETPGFGVRLNPEVELRRPYDHD</sequence>
<comment type="function">
    <text evidence="1">Catalyzes the dehydration of L-rhamnonate to 2-keto-3-deoxy-L-rhamnonate (KDR).</text>
</comment>
<comment type="catalytic activity">
    <reaction evidence="1">
        <text>L-rhamnonate = 2-dehydro-3-deoxy-L-rhamnonate + H2O</text>
        <dbReference type="Rhea" id="RHEA:23080"/>
        <dbReference type="ChEBI" id="CHEBI:15377"/>
        <dbReference type="ChEBI" id="CHEBI:58118"/>
        <dbReference type="ChEBI" id="CHEBI:58371"/>
        <dbReference type="EC" id="4.2.1.90"/>
    </reaction>
</comment>
<comment type="cofactor">
    <cofactor evidence="1">
        <name>Mg(2+)</name>
        <dbReference type="ChEBI" id="CHEBI:18420"/>
    </cofactor>
    <text evidence="1">Binds 1 Mg(2+) ion per subunit.</text>
</comment>
<comment type="miscellaneous">
    <text evidence="1">Reaction proceeds via a syn dehydration.</text>
</comment>
<comment type="similarity">
    <text evidence="1">Belongs to the mandelate racemase/muconate lactonizing enzyme family. RhamD subfamily.</text>
</comment>